<reference key="1">
    <citation type="submission" date="1999-05" db="EMBL/GenBank/DDBJ databases">
        <title>Characterization and chromosomal organization of the murD-murC region of Brevibacterium lactofermentum ATCC 13869.</title>
        <authorList>
            <person name="Ramos A."/>
            <person name="Honrubia P."/>
            <person name="Gil J.A."/>
        </authorList>
    </citation>
    <scope>NUCLEOTIDE SEQUENCE [GENOMIC DNA]</scope>
    <source>
        <strain>ATCC 13869 / DSMZ 1412 / NCIMB 9567</strain>
    </source>
</reference>
<reference key="2">
    <citation type="journal article" date="2003" name="Appl. Microbiol. Biotechnol.">
        <title>The Corynebacterium glutamicum genome: features and impacts on biotechnological processes.</title>
        <authorList>
            <person name="Ikeda M."/>
            <person name="Nakagawa S."/>
        </authorList>
    </citation>
    <scope>NUCLEOTIDE SEQUENCE [LARGE SCALE GENOMIC DNA]</scope>
    <source>
        <strain>ATCC 13032 / DSM 20300 / JCM 1318 / BCRC 11384 / CCUG 27702 / LMG 3730 / NBRC 12168 / NCIMB 10025 / NRRL B-2784 / 534</strain>
    </source>
</reference>
<reference key="3">
    <citation type="journal article" date="2003" name="J. Biotechnol.">
        <title>The complete Corynebacterium glutamicum ATCC 13032 genome sequence and its impact on the production of L-aspartate-derived amino acids and vitamins.</title>
        <authorList>
            <person name="Kalinowski J."/>
            <person name="Bathe B."/>
            <person name="Bartels D."/>
            <person name="Bischoff N."/>
            <person name="Bott M."/>
            <person name="Burkovski A."/>
            <person name="Dusch N."/>
            <person name="Eggeling L."/>
            <person name="Eikmanns B.J."/>
            <person name="Gaigalat L."/>
            <person name="Goesmann A."/>
            <person name="Hartmann M."/>
            <person name="Huthmacher K."/>
            <person name="Kraemer R."/>
            <person name="Linke B."/>
            <person name="McHardy A.C."/>
            <person name="Meyer F."/>
            <person name="Moeckel B."/>
            <person name="Pfefferle W."/>
            <person name="Puehler A."/>
            <person name="Rey D.A."/>
            <person name="Rueckert C."/>
            <person name="Rupp O."/>
            <person name="Sahm H."/>
            <person name="Wendisch V.F."/>
            <person name="Wiegraebe I."/>
            <person name="Tauch A."/>
        </authorList>
    </citation>
    <scope>NUCLEOTIDE SEQUENCE [LARGE SCALE GENOMIC DNA]</scope>
    <source>
        <strain>ATCC 13032 / DSM 20300 / JCM 1318 / BCRC 11384 / CCUG 27702 / LMG 3730 / NBRC 12168 / NCIMB 10025 / NRRL B-2784 / 534</strain>
    </source>
</reference>
<keyword id="KW-0131">Cell cycle</keyword>
<keyword id="KW-0132">Cell division</keyword>
<keyword id="KW-1003">Cell membrane</keyword>
<keyword id="KW-0133">Cell shape</keyword>
<keyword id="KW-0961">Cell wall biogenesis/degradation</keyword>
<keyword id="KW-0328">Glycosyltransferase</keyword>
<keyword id="KW-0472">Membrane</keyword>
<keyword id="KW-0573">Peptidoglycan synthesis</keyword>
<keyword id="KW-1185">Reference proteome</keyword>
<keyword id="KW-0808">Transferase</keyword>
<comment type="function">
    <text evidence="1">Cell wall formation. Catalyzes the transfer of a GlcNAc subunit on undecaprenyl-pyrophosphoryl-MurNAc-pentapeptide (lipid intermediate I) to form undecaprenyl-pyrophosphoryl-MurNAc-(pentapeptide)GlcNAc (lipid intermediate II).</text>
</comment>
<comment type="catalytic activity">
    <reaction evidence="1">
        <text>di-trans,octa-cis-undecaprenyl diphospho-N-acetyl-alpha-D-muramoyl-L-alanyl-D-glutamyl-meso-2,6-diaminopimeloyl-D-alanyl-D-alanine + UDP-N-acetyl-alpha-D-glucosamine = di-trans,octa-cis-undecaprenyl diphospho-[N-acetyl-alpha-D-glucosaminyl-(1-&gt;4)]-N-acetyl-alpha-D-muramoyl-L-alanyl-D-glutamyl-meso-2,6-diaminopimeloyl-D-alanyl-D-alanine + UDP + H(+)</text>
        <dbReference type="Rhea" id="RHEA:31227"/>
        <dbReference type="ChEBI" id="CHEBI:15378"/>
        <dbReference type="ChEBI" id="CHEBI:57705"/>
        <dbReference type="ChEBI" id="CHEBI:58223"/>
        <dbReference type="ChEBI" id="CHEBI:61387"/>
        <dbReference type="ChEBI" id="CHEBI:61388"/>
        <dbReference type="EC" id="2.4.1.227"/>
    </reaction>
</comment>
<comment type="pathway">
    <text evidence="1">Cell wall biogenesis; peptidoglycan biosynthesis.</text>
</comment>
<comment type="subcellular location">
    <subcellularLocation>
        <location evidence="1">Cell membrane</location>
        <topology evidence="1">Peripheral membrane protein</topology>
        <orientation evidence="1">Cytoplasmic side</orientation>
    </subcellularLocation>
</comment>
<comment type="similarity">
    <text evidence="1">Belongs to the glycosyltransferase 28 family. MurG subfamily.</text>
</comment>
<comment type="sequence caution" evidence="2">
    <conflict type="erroneous initiation">
        <sequence resource="EMBL-CDS" id="BAB99551"/>
    </conflict>
</comment>
<comment type="sequence caution" evidence="2">
    <conflict type="erroneous initiation">
        <sequence resource="EMBL-CDS" id="CAB66324"/>
    </conflict>
</comment>
<comment type="sequence caution" evidence="2">
    <conflict type="erroneous initiation">
        <sequence resource="EMBL-CDS" id="CAF20498"/>
    </conflict>
</comment>
<name>MURG_CORGL</name>
<dbReference type="EC" id="2.4.1.227" evidence="1"/>
<dbReference type="EMBL" id="AJ242646">
    <property type="protein sequence ID" value="CAB66324.1"/>
    <property type="status" value="ALT_INIT"/>
    <property type="molecule type" value="Genomic_DNA"/>
</dbReference>
<dbReference type="EMBL" id="BA000036">
    <property type="protein sequence ID" value="BAB99551.1"/>
    <property type="status" value="ALT_INIT"/>
    <property type="molecule type" value="Genomic_DNA"/>
</dbReference>
<dbReference type="EMBL" id="BX927154">
    <property type="protein sequence ID" value="CAF20498.1"/>
    <property type="status" value="ALT_INIT"/>
    <property type="molecule type" value="Genomic_DNA"/>
</dbReference>
<dbReference type="RefSeq" id="NP_601360.1">
    <property type="nucleotide sequence ID" value="NC_003450.3"/>
</dbReference>
<dbReference type="SMR" id="Q8NNN5"/>
<dbReference type="STRING" id="196627.cg2369"/>
<dbReference type="CAZy" id="GT28">
    <property type="family name" value="Glycosyltransferase Family 28"/>
</dbReference>
<dbReference type="KEGG" id="cgb:cg2369"/>
<dbReference type="KEGG" id="cgl:Cgl2158"/>
<dbReference type="PATRIC" id="fig|196627.13.peg.2096"/>
<dbReference type="eggNOG" id="COG0707">
    <property type="taxonomic scope" value="Bacteria"/>
</dbReference>
<dbReference type="HOGENOM" id="CLU_037404_1_0_11"/>
<dbReference type="OrthoDB" id="9808936at2"/>
<dbReference type="BioCyc" id="CORYNE:G18NG-11750-MONOMER"/>
<dbReference type="UniPathway" id="UPA00219"/>
<dbReference type="Proteomes" id="UP000000582">
    <property type="component" value="Chromosome"/>
</dbReference>
<dbReference type="Proteomes" id="UP000001009">
    <property type="component" value="Chromosome"/>
</dbReference>
<dbReference type="GO" id="GO:0005886">
    <property type="term" value="C:plasma membrane"/>
    <property type="evidence" value="ECO:0007669"/>
    <property type="project" value="UniProtKB-SubCell"/>
</dbReference>
<dbReference type="GO" id="GO:0051991">
    <property type="term" value="F:UDP-N-acetyl-D-glucosamine:N-acetylmuramoyl-L-alanyl-D-glutamyl-meso-2,6-diaminopimelyl-D-alanyl-D-alanine-diphosphoundecaprenol 4-beta-N-acetylglucosaminlytransferase activity"/>
    <property type="evidence" value="ECO:0007669"/>
    <property type="project" value="RHEA"/>
</dbReference>
<dbReference type="GO" id="GO:0050511">
    <property type="term" value="F:undecaprenyldiphospho-muramoylpentapeptide beta-N-acetylglucosaminyltransferase activity"/>
    <property type="evidence" value="ECO:0007669"/>
    <property type="project" value="UniProtKB-UniRule"/>
</dbReference>
<dbReference type="GO" id="GO:0005975">
    <property type="term" value="P:carbohydrate metabolic process"/>
    <property type="evidence" value="ECO:0007669"/>
    <property type="project" value="InterPro"/>
</dbReference>
<dbReference type="GO" id="GO:0051301">
    <property type="term" value="P:cell division"/>
    <property type="evidence" value="ECO:0007669"/>
    <property type="project" value="UniProtKB-KW"/>
</dbReference>
<dbReference type="GO" id="GO:0071555">
    <property type="term" value="P:cell wall organization"/>
    <property type="evidence" value="ECO:0007669"/>
    <property type="project" value="UniProtKB-KW"/>
</dbReference>
<dbReference type="GO" id="GO:0030259">
    <property type="term" value="P:lipid glycosylation"/>
    <property type="evidence" value="ECO:0007669"/>
    <property type="project" value="UniProtKB-UniRule"/>
</dbReference>
<dbReference type="GO" id="GO:0009252">
    <property type="term" value="P:peptidoglycan biosynthetic process"/>
    <property type="evidence" value="ECO:0007669"/>
    <property type="project" value="UniProtKB-UniRule"/>
</dbReference>
<dbReference type="GO" id="GO:0008360">
    <property type="term" value="P:regulation of cell shape"/>
    <property type="evidence" value="ECO:0007669"/>
    <property type="project" value="UniProtKB-KW"/>
</dbReference>
<dbReference type="CDD" id="cd03785">
    <property type="entry name" value="GT28_MurG"/>
    <property type="match status" value="1"/>
</dbReference>
<dbReference type="Gene3D" id="3.40.50.2000">
    <property type="entry name" value="Glycogen Phosphorylase B"/>
    <property type="match status" value="2"/>
</dbReference>
<dbReference type="HAMAP" id="MF_00033">
    <property type="entry name" value="MurG"/>
    <property type="match status" value="1"/>
</dbReference>
<dbReference type="InterPro" id="IPR006009">
    <property type="entry name" value="GlcNAc_MurG"/>
</dbReference>
<dbReference type="InterPro" id="IPR007235">
    <property type="entry name" value="Glyco_trans_28_C"/>
</dbReference>
<dbReference type="InterPro" id="IPR004276">
    <property type="entry name" value="GlycoTrans_28_N"/>
</dbReference>
<dbReference type="NCBIfam" id="TIGR01133">
    <property type="entry name" value="murG"/>
    <property type="match status" value="1"/>
</dbReference>
<dbReference type="PANTHER" id="PTHR21015:SF22">
    <property type="entry name" value="GLYCOSYLTRANSFERASE"/>
    <property type="match status" value="1"/>
</dbReference>
<dbReference type="PANTHER" id="PTHR21015">
    <property type="entry name" value="UDP-N-ACETYLGLUCOSAMINE--N-ACETYLMURAMYL-(PENTAPEPTIDE) PYROPHOSPHORYL-UNDECAPRENOL N-ACETYLGLUCOSAMINE TRANSFERASE 1"/>
    <property type="match status" value="1"/>
</dbReference>
<dbReference type="Pfam" id="PF04101">
    <property type="entry name" value="Glyco_tran_28_C"/>
    <property type="match status" value="1"/>
</dbReference>
<dbReference type="Pfam" id="PF03033">
    <property type="entry name" value="Glyco_transf_28"/>
    <property type="match status" value="1"/>
</dbReference>
<dbReference type="SUPFAM" id="SSF53756">
    <property type="entry name" value="UDP-Glycosyltransferase/glycogen phosphorylase"/>
    <property type="match status" value="1"/>
</dbReference>
<gene>
    <name evidence="1" type="primary">murG</name>
    <name type="ordered locus">Cgl2158</name>
    <name type="ordered locus">cg2369</name>
</gene>
<accession>Q8NNN5</accession>
<accession>Q9L4H3</accession>
<organism>
    <name type="scientific">Corynebacterium glutamicum (strain ATCC 13032 / DSM 20300 / JCM 1318 / BCRC 11384 / CCUG 27702 / LMG 3730 / NBRC 12168 / NCIMB 10025 / NRRL B-2784 / 534)</name>
    <dbReference type="NCBI Taxonomy" id="196627"/>
    <lineage>
        <taxon>Bacteria</taxon>
        <taxon>Bacillati</taxon>
        <taxon>Actinomycetota</taxon>
        <taxon>Actinomycetes</taxon>
        <taxon>Mycobacteriales</taxon>
        <taxon>Corynebacteriaceae</taxon>
        <taxon>Corynebacterium</taxon>
    </lineage>
</organism>
<proteinExistence type="inferred from homology"/>
<evidence type="ECO:0000255" key="1">
    <source>
        <dbReference type="HAMAP-Rule" id="MF_00033"/>
    </source>
</evidence>
<evidence type="ECO:0000305" key="2"/>
<sequence length="356" mass="36697">MRVVVAGGGTAGHIEPALAVAEALRDKHGATVSALGTARGLETTLVPDRGFELHLIEPVPVPRKPNMDLLKLPFRVAKALGQARKALKDTDAQAVIGFGGYVSAPAYMAAKSLGLPFFVHEANARAGMANKLGVKLGGVGLNAVAGSGMDGDVVGIPIRAVLSGARDESAADRARDTWGLDKDRQTIFVTGGSQGSVSINKAVEQAVDQLVEAGFQVLHAVGKKNELPAAKPGYHPVPFIDDMQAAYTVADLIVCRSGAMTVAEVTAAGVPAIYVPLPHGNGEQALNAQAVIKAGAARQIDDADFTAQTLIDATLDILLHPSTHQSMSDAAKTSTAGNASTVIADMIAATINSQHN</sequence>
<feature type="chain" id="PRO_0000109168" description="UDP-N-acetylglucosamine--N-acetylmuramyl-(pentapeptide) pyrophosphoryl-undecaprenol N-acetylglucosamine transferase">
    <location>
        <begin position="1"/>
        <end position="356"/>
    </location>
</feature>
<feature type="binding site" evidence="1">
    <location>
        <begin position="10"/>
        <end position="12"/>
    </location>
    <ligand>
        <name>UDP-N-acetyl-alpha-D-glucosamine</name>
        <dbReference type="ChEBI" id="CHEBI:57705"/>
    </ligand>
</feature>
<feature type="binding site" evidence="1">
    <location>
        <position position="123"/>
    </location>
    <ligand>
        <name>UDP-N-acetyl-alpha-D-glucosamine</name>
        <dbReference type="ChEBI" id="CHEBI:57705"/>
    </ligand>
</feature>
<feature type="binding site" evidence="1">
    <location>
        <position position="159"/>
    </location>
    <ligand>
        <name>UDP-N-acetyl-alpha-D-glucosamine</name>
        <dbReference type="ChEBI" id="CHEBI:57705"/>
    </ligand>
</feature>
<feature type="binding site" evidence="1">
    <location>
        <position position="193"/>
    </location>
    <ligand>
        <name>UDP-N-acetyl-alpha-D-glucosamine</name>
        <dbReference type="ChEBI" id="CHEBI:57705"/>
    </ligand>
</feature>
<feature type="binding site" evidence="1">
    <location>
        <position position="240"/>
    </location>
    <ligand>
        <name>UDP-N-acetyl-alpha-D-glucosamine</name>
        <dbReference type="ChEBI" id="CHEBI:57705"/>
    </ligand>
</feature>
<feature type="binding site" evidence="1">
    <location>
        <position position="284"/>
    </location>
    <ligand>
        <name>UDP-N-acetyl-alpha-D-glucosamine</name>
        <dbReference type="ChEBI" id="CHEBI:57705"/>
    </ligand>
</feature>
<feature type="sequence conflict" description="In Ref. 1; CAB66324." evidence="2" ref="1">
    <original>A</original>
    <variation>R</variation>
    <location>
        <position position="104"/>
    </location>
</feature>
<feature type="sequence conflict" description="In Ref. 1; CAB66324." evidence="2" ref="1">
    <original>V</original>
    <variation>I</variation>
    <location>
        <position position="207"/>
    </location>
</feature>
<feature type="sequence conflict" description="In Ref. 1; CAB66324." evidence="2" ref="1">
    <original>A</original>
    <variation>R</variation>
    <location>
        <position position="259"/>
    </location>
</feature>
<protein>
    <recommendedName>
        <fullName evidence="1">UDP-N-acetylglucosamine--N-acetylmuramyl-(pentapeptide) pyrophosphoryl-undecaprenol N-acetylglucosamine transferase</fullName>
        <ecNumber evidence="1">2.4.1.227</ecNumber>
    </recommendedName>
    <alternativeName>
        <fullName evidence="1">Undecaprenyl-PP-MurNAc-pentapeptide-UDPGlcNAc GlcNAc transferase</fullName>
    </alternativeName>
</protein>